<dbReference type="EMBL" id="BC047959">
    <property type="protein sequence ID" value="AAH47959.1"/>
    <property type="molecule type" value="mRNA"/>
</dbReference>
<dbReference type="EMBL" id="BC108866">
    <property type="protein sequence ID" value="AAI08867.1"/>
    <property type="molecule type" value="mRNA"/>
</dbReference>
<dbReference type="RefSeq" id="NP_001080889.1">
    <property type="nucleotide sequence ID" value="NM_001087420.1"/>
</dbReference>
<dbReference type="SMR" id="Q801R7"/>
<dbReference type="GeneID" id="380583"/>
<dbReference type="KEGG" id="xla:380583"/>
<dbReference type="AGR" id="Xenbase:XB-GENE-6253414"/>
<dbReference type="CTD" id="380583"/>
<dbReference type="Xenbase" id="XB-GENE-6253414">
    <property type="gene designation" value="plekhj1.L"/>
</dbReference>
<dbReference type="OrthoDB" id="10055808at2759"/>
<dbReference type="Proteomes" id="UP000186698">
    <property type="component" value="Chromosome 1L"/>
</dbReference>
<dbReference type="Bgee" id="380583">
    <property type="expression patterns" value="Expressed in spleen and 19 other cell types or tissues"/>
</dbReference>
<dbReference type="GO" id="GO:0005829">
    <property type="term" value="C:cytosol"/>
    <property type="evidence" value="ECO:0007669"/>
    <property type="project" value="GOC"/>
</dbReference>
<dbReference type="GO" id="GO:0005769">
    <property type="term" value="C:early endosome"/>
    <property type="evidence" value="ECO:0000318"/>
    <property type="project" value="GO_Central"/>
</dbReference>
<dbReference type="GO" id="GO:0055037">
    <property type="term" value="C:recycling endosome"/>
    <property type="evidence" value="ECO:0000318"/>
    <property type="project" value="GO_Central"/>
</dbReference>
<dbReference type="GO" id="GO:0005802">
    <property type="term" value="C:trans-Golgi network"/>
    <property type="evidence" value="ECO:0000318"/>
    <property type="project" value="GO_Central"/>
</dbReference>
<dbReference type="GO" id="GO:0007032">
    <property type="term" value="P:endosome organization"/>
    <property type="evidence" value="ECO:0000318"/>
    <property type="project" value="GO_Central"/>
</dbReference>
<dbReference type="GO" id="GO:0001881">
    <property type="term" value="P:receptor recycling"/>
    <property type="evidence" value="ECO:0000318"/>
    <property type="project" value="GO_Central"/>
</dbReference>
<dbReference type="GO" id="GO:0042147">
    <property type="term" value="P:retrograde transport, endosome to Golgi"/>
    <property type="evidence" value="ECO:0000318"/>
    <property type="project" value="GO_Central"/>
</dbReference>
<dbReference type="CDD" id="cd13258">
    <property type="entry name" value="PH_PLEKHJ1"/>
    <property type="match status" value="1"/>
</dbReference>
<dbReference type="FunFam" id="2.30.29.30:FF:000300">
    <property type="entry name" value="pleckstrin homology domain-containing family J member 1"/>
    <property type="match status" value="1"/>
</dbReference>
<dbReference type="Gene3D" id="2.30.29.30">
    <property type="entry name" value="Pleckstrin-homology domain (PH domain)/Phosphotyrosine-binding domain (PTB)"/>
    <property type="match status" value="1"/>
</dbReference>
<dbReference type="InterPro" id="IPR045188">
    <property type="entry name" value="Boi1/Boi2-like"/>
</dbReference>
<dbReference type="InterPro" id="IPR011993">
    <property type="entry name" value="PH-like_dom_sf"/>
</dbReference>
<dbReference type="InterPro" id="IPR001849">
    <property type="entry name" value="PH_domain"/>
</dbReference>
<dbReference type="PANTHER" id="PTHR22902:SF9">
    <property type="entry name" value="PLECKSTRIN HOMOLOGY DOMAIN-CONTAINING FAMILY J MEMBER 1"/>
    <property type="match status" value="1"/>
</dbReference>
<dbReference type="PANTHER" id="PTHR22902">
    <property type="entry name" value="SESQUIPEDALIAN"/>
    <property type="match status" value="1"/>
</dbReference>
<dbReference type="Pfam" id="PF00169">
    <property type="entry name" value="PH"/>
    <property type="match status" value="1"/>
</dbReference>
<dbReference type="SMART" id="SM00233">
    <property type="entry name" value="PH"/>
    <property type="match status" value="1"/>
</dbReference>
<dbReference type="SUPFAM" id="SSF50729">
    <property type="entry name" value="PH domain-like"/>
    <property type="match status" value="1"/>
</dbReference>
<dbReference type="PROSITE" id="PS50003">
    <property type="entry name" value="PH_DOMAIN"/>
    <property type="match status" value="1"/>
</dbReference>
<gene>
    <name type="primary">plekhj1</name>
</gene>
<keyword id="KW-1185">Reference proteome</keyword>
<organism>
    <name type="scientific">Xenopus laevis</name>
    <name type="common">African clawed frog</name>
    <dbReference type="NCBI Taxonomy" id="8355"/>
    <lineage>
        <taxon>Eukaryota</taxon>
        <taxon>Metazoa</taxon>
        <taxon>Chordata</taxon>
        <taxon>Craniata</taxon>
        <taxon>Vertebrata</taxon>
        <taxon>Euteleostomi</taxon>
        <taxon>Amphibia</taxon>
        <taxon>Batrachia</taxon>
        <taxon>Anura</taxon>
        <taxon>Pipoidea</taxon>
        <taxon>Pipidae</taxon>
        <taxon>Xenopodinae</taxon>
        <taxon>Xenopus</taxon>
        <taxon>Xenopus</taxon>
    </lineage>
</organism>
<evidence type="ECO:0000255" key="1">
    <source>
        <dbReference type="PROSITE-ProRule" id="PRU00145"/>
    </source>
</evidence>
<proteinExistence type="evidence at transcript level"/>
<protein>
    <recommendedName>
        <fullName>Pleckstrin homology domain-containing family J member 1</fullName>
        <shortName>PH domain-containing family J member 1</shortName>
    </recommendedName>
</protein>
<sequence length="149" mass="17548">MRYNEKELLCLSRQRAEKAAELGMRGPKKGSVLKKRLVKLVVNFLFYFRIDEEEPIGALLLEHCRVSKEDEKGFSIHFIDEPEKKYMFECSSQEQCVEWVEALTNASYEFMRRSLMFYRNEILKMTGKDPLEQYGISGESRFQLENASL</sequence>
<accession>Q801R7</accession>
<name>PKHJ1_XENLA</name>
<reference key="1">
    <citation type="submission" date="2003-03" db="EMBL/GenBank/DDBJ databases">
        <authorList>
            <consortium name="NIH - Xenopus Gene Collection (XGC) project"/>
        </authorList>
    </citation>
    <scope>NUCLEOTIDE SEQUENCE [LARGE SCALE MRNA]</scope>
    <source>
        <tissue>Embryo</tissue>
    </source>
</reference>
<feature type="chain" id="PRO_0000309234" description="Pleckstrin homology domain-containing family J member 1">
    <location>
        <begin position="1"/>
        <end position="149"/>
    </location>
</feature>
<feature type="domain" description="PH" evidence="1">
    <location>
        <begin position="15"/>
        <end position="108"/>
    </location>
</feature>